<feature type="chain" id="PRO_0000363320" description="Probable protein phosphatase 2C 73">
    <location>
        <begin position="1"/>
        <end position="420"/>
    </location>
</feature>
<feature type="domain" description="PPM-type phosphatase" evidence="2">
    <location>
        <begin position="33"/>
        <end position="336"/>
    </location>
</feature>
<feature type="region of interest" description="Disordered" evidence="3">
    <location>
        <begin position="96"/>
        <end position="119"/>
    </location>
</feature>
<feature type="compositionally biased region" description="Polar residues" evidence="3">
    <location>
        <begin position="96"/>
        <end position="105"/>
    </location>
</feature>
<feature type="compositionally biased region" description="Basic and acidic residues" evidence="3">
    <location>
        <begin position="106"/>
        <end position="115"/>
    </location>
</feature>
<feature type="binding site" evidence="1">
    <location>
        <position position="69"/>
    </location>
    <ligand>
        <name>Mn(2+)</name>
        <dbReference type="ChEBI" id="CHEBI:29035"/>
        <label>1</label>
    </ligand>
</feature>
<feature type="binding site" evidence="1">
    <location>
        <position position="69"/>
    </location>
    <ligand>
        <name>Mn(2+)</name>
        <dbReference type="ChEBI" id="CHEBI:29035"/>
        <label>2</label>
    </ligand>
</feature>
<feature type="binding site" evidence="1">
    <location>
        <position position="70"/>
    </location>
    <ligand>
        <name>Mn(2+)</name>
        <dbReference type="ChEBI" id="CHEBI:29035"/>
        <label>1</label>
    </ligand>
</feature>
<feature type="binding site" evidence="1">
    <location>
        <position position="281"/>
    </location>
    <ligand>
        <name>Mn(2+)</name>
        <dbReference type="ChEBI" id="CHEBI:29035"/>
        <label>2</label>
    </ligand>
</feature>
<feature type="binding site" evidence="1">
    <location>
        <position position="327"/>
    </location>
    <ligand>
        <name>Mn(2+)</name>
        <dbReference type="ChEBI" id="CHEBI:29035"/>
        <label>2</label>
    </ligand>
</feature>
<organism>
    <name type="scientific">Oryza sativa subsp. japonica</name>
    <name type="common">Rice</name>
    <dbReference type="NCBI Taxonomy" id="39947"/>
    <lineage>
        <taxon>Eukaryota</taxon>
        <taxon>Viridiplantae</taxon>
        <taxon>Streptophyta</taxon>
        <taxon>Embryophyta</taxon>
        <taxon>Tracheophyta</taxon>
        <taxon>Spermatophyta</taxon>
        <taxon>Magnoliopsida</taxon>
        <taxon>Liliopsida</taxon>
        <taxon>Poales</taxon>
        <taxon>Poaceae</taxon>
        <taxon>BOP clade</taxon>
        <taxon>Oryzoideae</taxon>
        <taxon>Oryzeae</taxon>
        <taxon>Oryzinae</taxon>
        <taxon>Oryza</taxon>
        <taxon>Oryza sativa</taxon>
    </lineage>
</organism>
<keyword id="KW-0378">Hydrolase</keyword>
<keyword id="KW-0460">Magnesium</keyword>
<keyword id="KW-0464">Manganese</keyword>
<keyword id="KW-0479">Metal-binding</keyword>
<keyword id="KW-0904">Protein phosphatase</keyword>
<keyword id="KW-1185">Reference proteome</keyword>
<sequence>MGICCSKGKEELEEEGFPWKHDAFFHDQLWSAGVSMHTKQGWKGANQDAMTTCQDFAGHKGQIFCGVFDGHGPLGREVARHVRDVLPVKLSSSLALKTEQDPSSNTDKETLEKSDCTSLSDTSNEKQLLSTWKNIFVKTFEDVDEDLRQHSGIDCICSGTTAVTVVRQGDHLIIANLGDSRAVLCTRDSKDRPISVQLTTDLKPNLPSEAERILNSKGRVFAMDDEPDVPRMWLPDQDAPGLAMARAFGDFCLKSHGLICTPEVYYRKLSAKDDFLVLATDGIWDVLSNKEVIKIVSSATDHSKAAKQLVERAVRTWRRKFPTSMVDDCAVVCLFLKPSPSSSESTPGDAKPPQAVSFTGSFRKVLGGGGGEAEEGTNVWRALEGVARVNSVVRLPRMGAVLSWRRRSTSLEEDDEARID</sequence>
<gene>
    <name type="ordered locus">Os11g0109000</name>
    <name type="ordered locus">LOC_Os11g01790</name>
</gene>
<reference key="1">
    <citation type="journal article" date="2005" name="BMC Biol.">
        <title>The sequence of rice chromosomes 11 and 12, rich in disease resistance genes and recent gene duplications.</title>
        <authorList>
            <consortium name="The rice chromosomes 11 and 12 sequencing consortia"/>
        </authorList>
    </citation>
    <scope>NUCLEOTIDE SEQUENCE [LARGE SCALE GENOMIC DNA]</scope>
    <source>
        <strain>cv. Nipponbare</strain>
    </source>
</reference>
<reference key="2">
    <citation type="journal article" date="2005" name="Nature">
        <title>The map-based sequence of the rice genome.</title>
        <authorList>
            <consortium name="International rice genome sequencing project (IRGSP)"/>
        </authorList>
    </citation>
    <scope>NUCLEOTIDE SEQUENCE [LARGE SCALE GENOMIC DNA]</scope>
    <source>
        <strain>cv. Nipponbare</strain>
    </source>
</reference>
<reference key="3">
    <citation type="journal article" date="2008" name="Nucleic Acids Res.">
        <title>The rice annotation project database (RAP-DB): 2008 update.</title>
        <authorList>
            <consortium name="The rice annotation project (RAP)"/>
        </authorList>
    </citation>
    <scope>GENOME REANNOTATION</scope>
    <source>
        <strain>cv. Nipponbare</strain>
    </source>
</reference>
<reference key="4">
    <citation type="journal article" date="2013" name="Rice">
        <title>Improvement of the Oryza sativa Nipponbare reference genome using next generation sequence and optical map data.</title>
        <authorList>
            <person name="Kawahara Y."/>
            <person name="de la Bastide M."/>
            <person name="Hamilton J.P."/>
            <person name="Kanamori H."/>
            <person name="McCombie W.R."/>
            <person name="Ouyang S."/>
            <person name="Schwartz D.C."/>
            <person name="Tanaka T."/>
            <person name="Wu J."/>
            <person name="Zhou S."/>
            <person name="Childs K.L."/>
            <person name="Davidson R.M."/>
            <person name="Lin H."/>
            <person name="Quesada-Ocampo L."/>
            <person name="Vaillancourt B."/>
            <person name="Sakai H."/>
            <person name="Lee S.S."/>
            <person name="Kim J."/>
            <person name="Numa H."/>
            <person name="Itoh T."/>
            <person name="Buell C.R."/>
            <person name="Matsumoto T."/>
        </authorList>
    </citation>
    <scope>GENOME REANNOTATION</scope>
    <source>
        <strain>cv. Nipponbare</strain>
    </source>
</reference>
<reference key="5">
    <citation type="journal article" date="2003" name="Science">
        <title>Collection, mapping, and annotation of over 28,000 cDNA clones from japonica rice.</title>
        <authorList>
            <consortium name="The rice full-length cDNA consortium"/>
        </authorList>
    </citation>
    <scope>NUCLEOTIDE SEQUENCE [LARGE SCALE MRNA]</scope>
    <source>
        <strain>cv. Nipponbare</strain>
    </source>
</reference>
<reference key="6">
    <citation type="journal article" date="2008" name="BMC Genomics">
        <title>Genome-wide and expression analysis of protein phosphatase 2C in rice and Arabidopsis.</title>
        <authorList>
            <person name="Xue T."/>
            <person name="Wang D."/>
            <person name="Zhang S."/>
            <person name="Ehlting J."/>
            <person name="Ni F."/>
            <person name="Jacab S."/>
            <person name="Zheng C."/>
            <person name="Zhong Y."/>
        </authorList>
    </citation>
    <scope>GENE FAMILY</scope>
    <scope>NOMENCLATURE</scope>
</reference>
<protein>
    <recommendedName>
        <fullName>Probable protein phosphatase 2C 73</fullName>
        <shortName>OsPP2C73</shortName>
        <ecNumber>3.1.3.16</ecNumber>
    </recommendedName>
</protein>
<name>P2C73_ORYSJ</name>
<accession>Q2RBJ6</accession>
<accession>A0A0P0XY41</accession>
<evidence type="ECO:0000250" key="1"/>
<evidence type="ECO:0000255" key="2">
    <source>
        <dbReference type="PROSITE-ProRule" id="PRU01082"/>
    </source>
</evidence>
<evidence type="ECO:0000256" key="3">
    <source>
        <dbReference type="SAM" id="MobiDB-lite"/>
    </source>
</evidence>
<evidence type="ECO:0000305" key="4"/>
<comment type="catalytic activity">
    <reaction>
        <text>O-phospho-L-seryl-[protein] + H2O = L-seryl-[protein] + phosphate</text>
        <dbReference type="Rhea" id="RHEA:20629"/>
        <dbReference type="Rhea" id="RHEA-COMP:9863"/>
        <dbReference type="Rhea" id="RHEA-COMP:11604"/>
        <dbReference type="ChEBI" id="CHEBI:15377"/>
        <dbReference type="ChEBI" id="CHEBI:29999"/>
        <dbReference type="ChEBI" id="CHEBI:43474"/>
        <dbReference type="ChEBI" id="CHEBI:83421"/>
        <dbReference type="EC" id="3.1.3.16"/>
    </reaction>
</comment>
<comment type="catalytic activity">
    <reaction>
        <text>O-phospho-L-threonyl-[protein] + H2O = L-threonyl-[protein] + phosphate</text>
        <dbReference type="Rhea" id="RHEA:47004"/>
        <dbReference type="Rhea" id="RHEA-COMP:11060"/>
        <dbReference type="Rhea" id="RHEA-COMP:11605"/>
        <dbReference type="ChEBI" id="CHEBI:15377"/>
        <dbReference type="ChEBI" id="CHEBI:30013"/>
        <dbReference type="ChEBI" id="CHEBI:43474"/>
        <dbReference type="ChEBI" id="CHEBI:61977"/>
        <dbReference type="EC" id="3.1.3.16"/>
    </reaction>
</comment>
<comment type="cofactor">
    <cofactor evidence="1">
        <name>Mg(2+)</name>
        <dbReference type="ChEBI" id="CHEBI:18420"/>
    </cofactor>
    <cofactor evidence="1">
        <name>Mn(2+)</name>
        <dbReference type="ChEBI" id="CHEBI:29035"/>
    </cofactor>
    <text evidence="1">Binds 2 magnesium or manganese ions per subunit.</text>
</comment>
<comment type="similarity">
    <text evidence="4">Belongs to the PP2C family.</text>
</comment>
<proteinExistence type="evidence at transcript level"/>
<dbReference type="EC" id="3.1.3.16"/>
<dbReference type="EMBL" id="DP000010">
    <property type="protein sequence ID" value="ABA91135.1"/>
    <property type="molecule type" value="Genomic_DNA"/>
</dbReference>
<dbReference type="EMBL" id="AP008217">
    <property type="protein sequence ID" value="BAF27395.1"/>
    <property type="molecule type" value="Genomic_DNA"/>
</dbReference>
<dbReference type="EMBL" id="AP014967">
    <property type="protein sequence ID" value="BAT12345.1"/>
    <property type="molecule type" value="Genomic_DNA"/>
</dbReference>
<dbReference type="EMBL" id="AK063260">
    <property type="protein sequence ID" value="BAG88619.1"/>
    <property type="molecule type" value="mRNA"/>
</dbReference>
<dbReference type="RefSeq" id="XP_015617038.1">
    <property type="nucleotide sequence ID" value="XM_015761552.1"/>
</dbReference>
<dbReference type="SMR" id="Q2RBJ6"/>
<dbReference type="FunCoup" id="Q2RBJ6">
    <property type="interactions" value="8"/>
</dbReference>
<dbReference type="STRING" id="39947.Q2RBJ6"/>
<dbReference type="PaxDb" id="39947-Q2RBJ6"/>
<dbReference type="EnsemblPlants" id="Os11t0109000-01">
    <property type="protein sequence ID" value="Os11t0109000-01"/>
    <property type="gene ID" value="Os11g0109000"/>
</dbReference>
<dbReference type="Gramene" id="Os11t0109000-01">
    <property type="protein sequence ID" value="Os11t0109000-01"/>
    <property type="gene ID" value="Os11g0109000"/>
</dbReference>
<dbReference type="KEGG" id="dosa:Os11g0109000"/>
<dbReference type="eggNOG" id="KOG0698">
    <property type="taxonomic scope" value="Eukaryota"/>
</dbReference>
<dbReference type="HOGENOM" id="CLU_013173_6_0_1"/>
<dbReference type="InParanoid" id="Q2RBJ6"/>
<dbReference type="OMA" id="GACCTKD"/>
<dbReference type="OrthoDB" id="10264738at2759"/>
<dbReference type="Proteomes" id="UP000000763">
    <property type="component" value="Chromosome 11"/>
</dbReference>
<dbReference type="Proteomes" id="UP000059680">
    <property type="component" value="Chromosome 11"/>
</dbReference>
<dbReference type="GO" id="GO:0046872">
    <property type="term" value="F:metal ion binding"/>
    <property type="evidence" value="ECO:0007669"/>
    <property type="project" value="UniProtKB-KW"/>
</dbReference>
<dbReference type="GO" id="GO:0004722">
    <property type="term" value="F:protein serine/threonine phosphatase activity"/>
    <property type="evidence" value="ECO:0000318"/>
    <property type="project" value="GO_Central"/>
</dbReference>
<dbReference type="GO" id="GO:1902531">
    <property type="term" value="P:regulation of intracellular signal transduction"/>
    <property type="evidence" value="ECO:0000318"/>
    <property type="project" value="GO_Central"/>
</dbReference>
<dbReference type="CDD" id="cd00143">
    <property type="entry name" value="PP2Cc"/>
    <property type="match status" value="1"/>
</dbReference>
<dbReference type="FunFam" id="3.60.40.10:FF:000026">
    <property type="entry name" value="probable protein phosphatase 2C 52"/>
    <property type="match status" value="1"/>
</dbReference>
<dbReference type="Gene3D" id="3.60.40.10">
    <property type="entry name" value="PPM-type phosphatase domain"/>
    <property type="match status" value="1"/>
</dbReference>
<dbReference type="InterPro" id="IPR015655">
    <property type="entry name" value="PP2C"/>
</dbReference>
<dbReference type="InterPro" id="IPR036457">
    <property type="entry name" value="PPM-type-like_dom_sf"/>
</dbReference>
<dbReference type="InterPro" id="IPR001932">
    <property type="entry name" value="PPM-type_phosphatase-like_dom"/>
</dbReference>
<dbReference type="PANTHER" id="PTHR47992">
    <property type="entry name" value="PROTEIN PHOSPHATASE"/>
    <property type="match status" value="1"/>
</dbReference>
<dbReference type="Pfam" id="PF00481">
    <property type="entry name" value="PP2C"/>
    <property type="match status" value="1"/>
</dbReference>
<dbReference type="SMART" id="SM00332">
    <property type="entry name" value="PP2Cc"/>
    <property type="match status" value="1"/>
</dbReference>
<dbReference type="SUPFAM" id="SSF81606">
    <property type="entry name" value="PP2C-like"/>
    <property type="match status" value="1"/>
</dbReference>
<dbReference type="PROSITE" id="PS51746">
    <property type="entry name" value="PPM_2"/>
    <property type="match status" value="1"/>
</dbReference>